<feature type="signal peptide" evidence="1">
    <location>
        <begin position="1"/>
        <end position="28"/>
    </location>
</feature>
<feature type="peptide" id="PRO_0000019073" description="CHH precursor-related peptide" evidence="1">
    <location>
        <begin position="29"/>
        <end position="61"/>
    </location>
</feature>
<feature type="peptide" id="PRO_0000019074" description="Crustacean hyperglycemic hormone">
    <location>
        <begin position="64"/>
        <end position="135"/>
    </location>
</feature>
<feature type="modified residue" description="Pyrrolidone carboxylic acid" evidence="2">
    <location>
        <position position="64"/>
    </location>
</feature>
<feature type="modified residue" description="D-phenylalanine; in form CHH-II" evidence="2">
    <location>
        <position position="66"/>
    </location>
</feature>
<feature type="modified residue" description="Valine amide" evidence="2">
    <location>
        <position position="135"/>
    </location>
</feature>
<feature type="disulfide bond" evidence="2">
    <location>
        <begin position="70"/>
        <end position="106"/>
    </location>
</feature>
<feature type="disulfide bond" evidence="2">
    <location>
        <begin position="86"/>
        <end position="102"/>
    </location>
</feature>
<feature type="disulfide bond" evidence="2">
    <location>
        <begin position="89"/>
        <end position="115"/>
    </location>
</feature>
<reference key="1">
    <citation type="submission" date="1999-05" db="EMBL/GenBank/DDBJ databases">
        <title>Crustacean hyperglycemic hormone precursor from Procambarus clarkii.</title>
        <authorList>
            <person name="Yasuda-Kamatani Y."/>
            <person name="Yasuda A."/>
        </authorList>
    </citation>
    <scope>NUCLEOTIDE SEQUENCE</scope>
</reference>
<reference key="2">
    <citation type="submission" date="1993-03" db="EMBL/GenBank/DDBJ databases">
        <authorList>
            <person name="Kang W."/>
        </authorList>
    </citation>
    <scope>NUCLEOTIDE SEQUENCE OF 56-90</scope>
</reference>
<reference key="3">
    <citation type="journal article" date="1994" name="Gen. Comp. Endocrinol.">
        <title>Characterization of crustacean hyperglycemic hormone from the crayfish (Procambarus clarkii): multiplicity of molecular forms by stereoinversion and diverse functions.</title>
        <authorList>
            <person name="Yasuda A."/>
            <person name="Yasuda Y."/>
            <person name="Fujita T."/>
            <person name="Naya Y."/>
        </authorList>
    </citation>
    <scope>PROTEIN SEQUENCE OF 64-135</scope>
    <scope>PYROGLUTAMATE FORMATION AT GLN-64</scope>
    <scope>D-AMINO ACID AT PHE-66</scope>
    <scope>AMIDATION AT VAL-135</scope>
    <scope>DISULFIDE BONDS</scope>
    <source>
        <tissue>Sinus gland</tissue>
    </source>
</reference>
<keyword id="KW-0027">Amidation</keyword>
<keyword id="KW-0119">Carbohydrate metabolism</keyword>
<keyword id="KW-0165">Cleavage on pair of basic residues</keyword>
<keyword id="KW-0208">D-amino acid</keyword>
<keyword id="KW-0903">Direct protein sequencing</keyword>
<keyword id="KW-1015">Disulfide bond</keyword>
<keyword id="KW-0313">Glucose metabolism</keyword>
<keyword id="KW-0372">Hormone</keyword>
<keyword id="KW-0527">Neuropeptide</keyword>
<keyword id="KW-0873">Pyrrolidone carboxylic acid</keyword>
<keyword id="KW-0964">Secreted</keyword>
<keyword id="KW-0732">Signal</keyword>
<sequence>MVSFRTMWSLVVVVVVVAASLGSSGVHGRSVEGSSRMERLLSSGSSSSEPLSFLSQDQSVNKRQVFDQACKGIYDRAIFKKLDRVCEDCYNLYRKPYVATTCRQNCYANSVFRQCLDDLLLIDVVDEYISGVQTVGK</sequence>
<name>CHH_PROCL</name>
<dbReference type="EMBL" id="AB027291">
    <property type="protein sequence ID" value="BAA89003.1"/>
    <property type="molecule type" value="mRNA"/>
</dbReference>
<dbReference type="EMBL" id="D14610">
    <property type="protein sequence ID" value="BAA03462.1"/>
    <property type="molecule type" value="Genomic_DNA"/>
</dbReference>
<dbReference type="RefSeq" id="XP_045610482.1">
    <property type="nucleotide sequence ID" value="XM_045754526.2"/>
</dbReference>
<dbReference type="RefSeq" id="XP_045610485.1">
    <property type="nucleotide sequence ID" value="XM_045754529.2"/>
</dbReference>
<dbReference type="RefSeq" id="XP_069193207.1">
    <property type="nucleotide sequence ID" value="XM_069337106.1"/>
</dbReference>
<dbReference type="RefSeq" id="XP_069193208.1">
    <property type="nucleotide sequence ID" value="XM_069337107.1"/>
</dbReference>
<dbReference type="SMR" id="Q25683"/>
<dbReference type="EnsemblMetazoa" id="XM_045754526.1">
    <property type="protein sequence ID" value="XP_045610482.1"/>
    <property type="gene ID" value="LOC123765781"/>
</dbReference>
<dbReference type="EnsemblMetazoa" id="XM_045754527.1">
    <property type="protein sequence ID" value="XP_045610483.1"/>
    <property type="gene ID" value="LOC123765782"/>
</dbReference>
<dbReference type="EnsemblMetazoa" id="XM_045754529.1">
    <property type="protein sequence ID" value="XP_045610485.1"/>
    <property type="gene ID" value="LOC123765783"/>
</dbReference>
<dbReference type="GeneID" id="123765781"/>
<dbReference type="GeneID" id="123765782"/>
<dbReference type="GeneID" id="123765783"/>
<dbReference type="GeneID" id="138349879"/>
<dbReference type="OrthoDB" id="6330469at2759"/>
<dbReference type="GO" id="GO:0005576">
    <property type="term" value="C:extracellular region"/>
    <property type="evidence" value="ECO:0007669"/>
    <property type="project" value="UniProtKB-SubCell"/>
</dbReference>
<dbReference type="GO" id="GO:0005184">
    <property type="term" value="F:neuropeptide hormone activity"/>
    <property type="evidence" value="ECO:0007669"/>
    <property type="project" value="InterPro"/>
</dbReference>
<dbReference type="GO" id="GO:0007623">
    <property type="term" value="P:circadian rhythm"/>
    <property type="evidence" value="ECO:0007669"/>
    <property type="project" value="TreeGrafter"/>
</dbReference>
<dbReference type="GO" id="GO:0006006">
    <property type="term" value="P:glucose metabolic process"/>
    <property type="evidence" value="ECO:0007669"/>
    <property type="project" value="UniProtKB-KW"/>
</dbReference>
<dbReference type="GO" id="GO:0007218">
    <property type="term" value="P:neuropeptide signaling pathway"/>
    <property type="evidence" value="ECO:0007669"/>
    <property type="project" value="UniProtKB-KW"/>
</dbReference>
<dbReference type="Gene3D" id="1.10.2010.10">
    <property type="entry name" value="Crustacean CHH/MIH/GIH neurohormone"/>
    <property type="match status" value="1"/>
</dbReference>
<dbReference type="InterPro" id="IPR018251">
    <property type="entry name" value="Crust_neurhormone_CS"/>
</dbReference>
<dbReference type="InterPro" id="IPR031098">
    <property type="entry name" value="Crust_neurohorm"/>
</dbReference>
<dbReference type="InterPro" id="IPR035957">
    <property type="entry name" value="Crust_neurohorm_sf"/>
</dbReference>
<dbReference type="InterPro" id="IPR001166">
    <property type="entry name" value="Hyperglycemic"/>
</dbReference>
<dbReference type="InterPro" id="IPR000346">
    <property type="entry name" value="Hyperglycemic1"/>
</dbReference>
<dbReference type="PANTHER" id="PTHR35981">
    <property type="entry name" value="ION TRANSPORT PEPTIDE, ISOFORM C"/>
    <property type="match status" value="1"/>
</dbReference>
<dbReference type="PANTHER" id="PTHR35981:SF2">
    <property type="entry name" value="ION TRANSPORT PEPTIDE, ISOFORM C"/>
    <property type="match status" value="1"/>
</dbReference>
<dbReference type="Pfam" id="PF01147">
    <property type="entry name" value="Crust_neurohorm"/>
    <property type="match status" value="1"/>
</dbReference>
<dbReference type="PRINTS" id="PR00548">
    <property type="entry name" value="HYPRGLYCEMC1"/>
</dbReference>
<dbReference type="PRINTS" id="PR00550">
    <property type="entry name" value="HYPRGLYCEMIC"/>
</dbReference>
<dbReference type="SUPFAM" id="SSF81778">
    <property type="entry name" value="Crustacean CHH/MIH/GIH neurohormone"/>
    <property type="match status" value="1"/>
</dbReference>
<dbReference type="PROSITE" id="PS01250">
    <property type="entry name" value="CHH_MIH_GIH"/>
    <property type="match status" value="1"/>
</dbReference>
<organism>
    <name type="scientific">Procambarus clarkii</name>
    <name type="common">Red swamp crayfish</name>
    <dbReference type="NCBI Taxonomy" id="6728"/>
    <lineage>
        <taxon>Eukaryota</taxon>
        <taxon>Metazoa</taxon>
        <taxon>Ecdysozoa</taxon>
        <taxon>Arthropoda</taxon>
        <taxon>Crustacea</taxon>
        <taxon>Multicrustacea</taxon>
        <taxon>Malacostraca</taxon>
        <taxon>Eumalacostraca</taxon>
        <taxon>Eucarida</taxon>
        <taxon>Decapoda</taxon>
        <taxon>Pleocyemata</taxon>
        <taxon>Astacidea</taxon>
        <taxon>Astacoidea</taxon>
        <taxon>Cambaridae</taxon>
        <taxon>Procambarus</taxon>
    </lineage>
</organism>
<evidence type="ECO:0000255" key="1"/>
<evidence type="ECO:0000269" key="2">
    <source>
    </source>
</evidence>
<evidence type="ECO:0000305" key="3"/>
<proteinExistence type="evidence at protein level"/>
<comment type="function">
    <text>Hormone found in the sinus gland of isopods and decapods which controls the blood sugar level. Has a secretagogue action over the amylase released from the midgut gland. May act as a stress hormone and may be involved in the control of molting and reproduction.</text>
</comment>
<comment type="subcellular location">
    <subcellularLocation>
        <location>Secreted</location>
    </subcellularLocation>
</comment>
<comment type="tissue specificity">
    <text>Produced by the medulla terminalis X-organ in the eyestalks and transported to the sinus gland where they are stored and released.</text>
</comment>
<comment type="similarity">
    <text evidence="3">Belongs to the arthropod CHH/MIH/GIH/VIH hormone family.</text>
</comment>
<protein>
    <recommendedName>
        <fullName>Crustacean hyperglycemic hormones</fullName>
    </recommendedName>
    <component>
        <recommendedName>
            <fullName>CHH precursor-related peptide</fullName>
            <shortName>CPRP</shortName>
        </recommendedName>
    </component>
    <component>
        <recommendedName>
            <fullName>Crustacean hyperglycemic hormone</fullName>
            <shortName>CHH</shortName>
        </recommendedName>
    </component>
</protein>
<accession>Q25683</accession>
<accession>Q9U5F0</accession>